<reference key="1">
    <citation type="journal article" date="2006" name="Genome Biol.">
        <title>Genomic analysis reveals that Pseudomonas aeruginosa virulence is combinatorial.</title>
        <authorList>
            <person name="Lee D.G."/>
            <person name="Urbach J.M."/>
            <person name="Wu G."/>
            <person name="Liberati N.T."/>
            <person name="Feinbaum R.L."/>
            <person name="Miyata S."/>
            <person name="Diggins L.T."/>
            <person name="He J."/>
            <person name="Saucier M."/>
            <person name="Deziel E."/>
            <person name="Friedman L."/>
            <person name="Li L."/>
            <person name="Grills G."/>
            <person name="Montgomery K."/>
            <person name="Kucherlapati R."/>
            <person name="Rahme L.G."/>
            <person name="Ausubel F.M."/>
        </authorList>
    </citation>
    <scope>NUCLEOTIDE SEQUENCE [LARGE SCALE GENOMIC DNA]</scope>
    <source>
        <strain>UCBPP-PA14</strain>
    </source>
</reference>
<reference key="2">
    <citation type="journal article" date="2014" name="Proteomics">
        <title>Extracellular Ser/Thr/Tyr phosphorylated proteins of Pseudomonas aeruginosa PA14 strain.</title>
        <authorList>
            <person name="Ouidir T."/>
            <person name="Jarnier F."/>
            <person name="Cosette P."/>
            <person name="Jouenne T."/>
            <person name="Hardouin J."/>
        </authorList>
    </citation>
    <scope>IDENTIFICATION BY MASS SPECTROMETRY</scope>
    <scope>SUBCELLULAR LOCATION</scope>
    <scope>PHOSPHORYLATION AT TYR-37 AND SER-210</scope>
    <source>
        <strain>UCBPP-PA14</strain>
    </source>
</reference>
<keyword id="KW-0002">3D-structure</keyword>
<keyword id="KW-0147">Chitin-binding</keyword>
<keyword id="KW-0597">Phosphoprotein</keyword>
<keyword id="KW-0964">Secreted</keyword>
<keyword id="KW-0732">Signal</keyword>
<feature type="signal peptide" evidence="2">
    <location>
        <begin position="1"/>
        <end position="25"/>
    </location>
</feature>
<feature type="chain" id="PRO_0000431399" description="Chitin-binding protein CbpD" evidence="2">
    <location>
        <begin position="26"/>
        <end position="389"/>
    </location>
</feature>
<feature type="domain" description="Chitin-binding type-4" evidence="2">
    <location>
        <begin position="26"/>
        <end position="208"/>
    </location>
</feature>
<feature type="modified residue" description="Phosphotyrosine" evidence="3">
    <location>
        <position position="37"/>
    </location>
</feature>
<feature type="modified residue" description="Phosphoserine" evidence="3">
    <location>
        <position position="210"/>
    </location>
</feature>
<feature type="strand" evidence="4">
    <location>
        <begin position="28"/>
        <end position="31"/>
    </location>
</feature>
<feature type="helix" evidence="4">
    <location>
        <begin position="35"/>
        <end position="42"/>
    </location>
</feature>
<feature type="helix" evidence="4">
    <location>
        <begin position="50"/>
        <end position="59"/>
    </location>
</feature>
<feature type="helix" evidence="4">
    <location>
        <begin position="61"/>
        <end position="65"/>
    </location>
</feature>
<feature type="turn" evidence="4">
    <location>
        <begin position="66"/>
        <end position="68"/>
    </location>
</feature>
<feature type="turn" evidence="4">
    <location>
        <begin position="80"/>
        <end position="82"/>
    </location>
</feature>
<feature type="turn" evidence="4">
    <location>
        <begin position="88"/>
        <end position="92"/>
    </location>
</feature>
<feature type="helix" evidence="4">
    <location>
        <begin position="94"/>
        <end position="100"/>
    </location>
</feature>
<feature type="strand" evidence="4">
    <location>
        <begin position="109"/>
        <end position="111"/>
    </location>
</feature>
<feature type="strand" evidence="4">
    <location>
        <begin position="119"/>
        <end position="124"/>
    </location>
</feature>
<feature type="strand" evidence="4">
    <location>
        <begin position="131"/>
        <end position="139"/>
    </location>
</feature>
<feature type="helix" evidence="4">
    <location>
        <begin position="151"/>
        <end position="153"/>
    </location>
</feature>
<feature type="strand" evidence="4">
    <location>
        <begin position="159"/>
        <end position="162"/>
    </location>
</feature>
<feature type="strand" evidence="4">
    <location>
        <begin position="171"/>
        <end position="176"/>
    </location>
</feature>
<feature type="strand" evidence="4">
    <location>
        <begin position="184"/>
        <end position="198"/>
    </location>
</feature>
<feature type="strand" evidence="4">
    <location>
        <begin position="200"/>
        <end position="209"/>
    </location>
</feature>
<comment type="function">
    <text evidence="1">Binds but does not hydrolyze chitin.</text>
</comment>
<comment type="subcellular location">
    <subcellularLocation>
        <location evidence="3">Secreted</location>
    </subcellularLocation>
</comment>
<sequence length="389" mass="41960">MKHYSATLALLPLTLALFLPQAAHAHGSMETPPSRVYGCFLEGPENPKSAACKAAVAAGGTQALYDWNGVNQGNANGNHQAVVPDGQLCGAGKALFKGLNLARSDWPSTAIAPDASGNFQFVYKASAPHATRYFDFYITKDGYNPEKPLAWSDLEPAPFCSITSVKLENGTYRMNCPLPQGKTGKHVIYNVWQRSDSPEAFYACIDVSFSGAVANPWQALGNLRAQQDLPAGATVTLRLFDAQGRDAQRHSLTLAQGNNGAKQWPLALAQKVNQDSTLVNIGVLDAYGAVSPVASSQDNQVYVRQAGYRFQVDIELPVEGGGEQPGGDGKVDFDYPQGLQQYDAGTVVRGADGKRYQCKPYPNSGWCKGWDLYYAPGKGMAWQDAWTLL</sequence>
<accession>Q02I11</accession>
<dbReference type="EMBL" id="CP000438">
    <property type="protein sequence ID" value="ABJ10011.1"/>
    <property type="molecule type" value="Genomic_DNA"/>
</dbReference>
<dbReference type="PDB" id="8C5N">
    <property type="method" value="X-ray"/>
    <property type="resolution" value="0.75 A"/>
    <property type="chains" value="A=26-212"/>
</dbReference>
<dbReference type="PDBsum" id="8C5N"/>
<dbReference type="SMR" id="Q02I11"/>
<dbReference type="CAZy" id="AA10">
    <property type="family name" value="Auxiliary Activities 10"/>
</dbReference>
<dbReference type="CAZy" id="CBM73">
    <property type="family name" value="Carbohydrate-Binding Module Family 73"/>
</dbReference>
<dbReference type="iPTMnet" id="Q02I11"/>
<dbReference type="KEGG" id="pau:PA14_53250"/>
<dbReference type="PseudoCAP" id="PA14_53250"/>
<dbReference type="HOGENOM" id="CLU_039396_2_0_6"/>
<dbReference type="BioCyc" id="PAER208963:G1G74-4481-MONOMER"/>
<dbReference type="Proteomes" id="UP000000653">
    <property type="component" value="Chromosome"/>
</dbReference>
<dbReference type="GO" id="GO:0005576">
    <property type="term" value="C:extracellular region"/>
    <property type="evidence" value="ECO:0007669"/>
    <property type="project" value="UniProtKB-SubCell"/>
</dbReference>
<dbReference type="GO" id="GO:0008061">
    <property type="term" value="F:chitin binding"/>
    <property type="evidence" value="ECO:0007669"/>
    <property type="project" value="UniProtKB-KW"/>
</dbReference>
<dbReference type="CDD" id="cd21177">
    <property type="entry name" value="LPMO_AA10"/>
    <property type="match status" value="1"/>
</dbReference>
<dbReference type="Gene3D" id="3.30.70.2150">
    <property type="match status" value="1"/>
</dbReference>
<dbReference type="Gene3D" id="2.70.50.50">
    <property type="entry name" value="chitin-binding protein cbp21"/>
    <property type="match status" value="1"/>
</dbReference>
<dbReference type="InterPro" id="IPR004302">
    <property type="entry name" value="Cellulose/chitin-bd_N"/>
</dbReference>
<dbReference type="InterPro" id="IPR041029">
    <property type="entry name" value="GbpA_2"/>
</dbReference>
<dbReference type="InterPro" id="IPR051024">
    <property type="entry name" value="GlcNAc_Chitin_IntDeg"/>
</dbReference>
<dbReference type="InterPro" id="IPR014756">
    <property type="entry name" value="Ig_E-set"/>
</dbReference>
<dbReference type="PANTHER" id="PTHR34823:SF1">
    <property type="entry name" value="CHITIN-BINDING TYPE-4 DOMAIN-CONTAINING PROTEIN"/>
    <property type="match status" value="1"/>
</dbReference>
<dbReference type="PANTHER" id="PTHR34823">
    <property type="entry name" value="GLCNAC-BINDING PROTEIN A"/>
    <property type="match status" value="1"/>
</dbReference>
<dbReference type="Pfam" id="PF18416">
    <property type="entry name" value="GbpA_2"/>
    <property type="match status" value="1"/>
</dbReference>
<dbReference type="Pfam" id="PF03067">
    <property type="entry name" value="LPMO_10"/>
    <property type="match status" value="1"/>
</dbReference>
<dbReference type="SUPFAM" id="SSF81296">
    <property type="entry name" value="E set domains"/>
    <property type="match status" value="1"/>
</dbReference>
<protein>
    <recommendedName>
        <fullName>Chitin-binding protein CbpD</fullName>
    </recommendedName>
</protein>
<evidence type="ECO:0000250" key="1">
    <source>
        <dbReference type="UniProtKB" id="Q9I589"/>
    </source>
</evidence>
<evidence type="ECO:0000255" key="2"/>
<evidence type="ECO:0000269" key="3">
    <source>
    </source>
</evidence>
<evidence type="ECO:0007829" key="4">
    <source>
        <dbReference type="PDB" id="8C5N"/>
    </source>
</evidence>
<name>CBPD_PSEAB</name>
<proteinExistence type="evidence at protein level"/>
<gene>
    <name type="primary">cpbD</name>
    <name type="ordered locus">PA14_53250</name>
</gene>
<organism>
    <name type="scientific">Pseudomonas aeruginosa (strain UCBPP-PA14)</name>
    <dbReference type="NCBI Taxonomy" id="208963"/>
    <lineage>
        <taxon>Bacteria</taxon>
        <taxon>Pseudomonadati</taxon>
        <taxon>Pseudomonadota</taxon>
        <taxon>Gammaproteobacteria</taxon>
        <taxon>Pseudomonadales</taxon>
        <taxon>Pseudomonadaceae</taxon>
        <taxon>Pseudomonas</taxon>
    </lineage>
</organism>